<dbReference type="EMBL" id="U67080">
    <property type="protein sequence ID" value="AAB40717.1"/>
    <property type="molecule type" value="mRNA"/>
</dbReference>
<dbReference type="EMBL" id="AF031942">
    <property type="protein sequence ID" value="AAC40048.1"/>
    <property type="molecule type" value="mRNA"/>
</dbReference>
<dbReference type="PIR" id="T14124">
    <property type="entry name" value="T14124"/>
</dbReference>
<dbReference type="PIR" id="T31669">
    <property type="entry name" value="T31669"/>
</dbReference>
<dbReference type="RefSeq" id="NP_695222.2">
    <property type="nucleotide sequence ID" value="NM_153310.2"/>
</dbReference>
<dbReference type="SMR" id="Q9QX27"/>
<dbReference type="FunCoup" id="Q9QX27">
    <property type="interactions" value="833"/>
</dbReference>
<dbReference type="STRING" id="10116.ENSRNOP00000072462"/>
<dbReference type="GlyGen" id="Q9QX27">
    <property type="glycosylation" value="4 sites"/>
</dbReference>
<dbReference type="PhosphoSitePlus" id="Q9QX27"/>
<dbReference type="PaxDb" id="10116-ENSRNOP00000056380"/>
<dbReference type="GeneID" id="266680"/>
<dbReference type="KEGG" id="rno:266680"/>
<dbReference type="UCSC" id="RGD:708566">
    <molecule id="Q9QX27-1"/>
    <property type="organism name" value="rat"/>
</dbReference>
<dbReference type="AGR" id="RGD:708566"/>
<dbReference type="CTD" id="9705"/>
<dbReference type="RGD" id="708566">
    <property type="gene designation" value="St18"/>
</dbReference>
<dbReference type="eggNOG" id="KOG3803">
    <property type="taxonomic scope" value="Eukaryota"/>
</dbReference>
<dbReference type="InParanoid" id="Q9QX27"/>
<dbReference type="OrthoDB" id="10069059at2759"/>
<dbReference type="PhylomeDB" id="Q9QX27"/>
<dbReference type="PRO" id="PR:Q9QX27"/>
<dbReference type="Proteomes" id="UP000002494">
    <property type="component" value="Unplaced"/>
</dbReference>
<dbReference type="GO" id="GO:0005634">
    <property type="term" value="C:nucleus"/>
    <property type="evidence" value="ECO:0000266"/>
    <property type="project" value="RGD"/>
</dbReference>
<dbReference type="GO" id="GO:0032993">
    <property type="term" value="C:protein-DNA complex"/>
    <property type="evidence" value="ECO:0000266"/>
    <property type="project" value="RGD"/>
</dbReference>
<dbReference type="GO" id="GO:0003677">
    <property type="term" value="F:DNA binding"/>
    <property type="evidence" value="ECO:0000314"/>
    <property type="project" value="RGD"/>
</dbReference>
<dbReference type="GO" id="GO:0000981">
    <property type="term" value="F:DNA-binding transcription factor activity, RNA polymerase II-specific"/>
    <property type="evidence" value="ECO:0000318"/>
    <property type="project" value="GO_Central"/>
</dbReference>
<dbReference type="GO" id="GO:0001227">
    <property type="term" value="F:DNA-binding transcription repressor activity, RNA polymerase II-specific"/>
    <property type="evidence" value="ECO:0000305"/>
    <property type="project" value="NTNU_SB"/>
</dbReference>
<dbReference type="GO" id="GO:0000978">
    <property type="term" value="F:RNA polymerase II cis-regulatory region sequence-specific DNA binding"/>
    <property type="evidence" value="ECO:0000266"/>
    <property type="project" value="RGD"/>
</dbReference>
<dbReference type="GO" id="GO:0000977">
    <property type="term" value="F:RNA polymerase II transcription regulatory region sequence-specific DNA binding"/>
    <property type="evidence" value="ECO:0000314"/>
    <property type="project" value="NTNU_SB"/>
</dbReference>
<dbReference type="GO" id="GO:0008270">
    <property type="term" value="F:zinc ion binding"/>
    <property type="evidence" value="ECO:0007669"/>
    <property type="project" value="UniProtKB-KW"/>
</dbReference>
<dbReference type="GO" id="GO:0070498">
    <property type="term" value="P:interleukin-1-mediated signaling pathway"/>
    <property type="evidence" value="ECO:0000266"/>
    <property type="project" value="RGD"/>
</dbReference>
<dbReference type="GO" id="GO:0070102">
    <property type="term" value="P:interleukin-6-mediated signaling pathway"/>
    <property type="evidence" value="ECO:0000266"/>
    <property type="project" value="RGD"/>
</dbReference>
<dbReference type="GO" id="GO:0008285">
    <property type="term" value="P:negative regulation of cell population proliferation"/>
    <property type="evidence" value="ECO:0000266"/>
    <property type="project" value="RGD"/>
</dbReference>
<dbReference type="GO" id="GO:0000122">
    <property type="term" value="P:negative regulation of transcription by RNA polymerase II"/>
    <property type="evidence" value="ECO:0000315"/>
    <property type="project" value="RGD"/>
</dbReference>
<dbReference type="GO" id="GO:0045944">
    <property type="term" value="P:positive regulation of transcription by RNA polymerase II"/>
    <property type="evidence" value="ECO:0000266"/>
    <property type="project" value="RGD"/>
</dbReference>
<dbReference type="GO" id="GO:0006357">
    <property type="term" value="P:regulation of transcription by RNA polymerase II"/>
    <property type="evidence" value="ECO:0000318"/>
    <property type="project" value="GO_Central"/>
</dbReference>
<dbReference type="GO" id="GO:0033209">
    <property type="term" value="P:tumor necrosis factor-mediated signaling pathway"/>
    <property type="evidence" value="ECO:0000266"/>
    <property type="project" value="RGD"/>
</dbReference>
<dbReference type="FunFam" id="4.10.320.30:FF:000001">
    <property type="entry name" value="Myelin transcription factor 1-like, a"/>
    <property type="match status" value="6"/>
</dbReference>
<dbReference type="Gene3D" id="4.10.320.30">
    <property type="match status" value="6"/>
</dbReference>
<dbReference type="InterPro" id="IPR013681">
    <property type="entry name" value="Myelin_TF"/>
</dbReference>
<dbReference type="InterPro" id="IPR002515">
    <property type="entry name" value="Znf_C2H2C"/>
</dbReference>
<dbReference type="InterPro" id="IPR036060">
    <property type="entry name" value="Znf_C2H2C_sf"/>
</dbReference>
<dbReference type="PANTHER" id="PTHR10816">
    <property type="entry name" value="MYELIN TRANSCRIPTION FACTOR 1-RELATED"/>
    <property type="match status" value="1"/>
</dbReference>
<dbReference type="PANTHER" id="PTHR10816:SF9">
    <property type="entry name" value="SUPPRESSION OF TUMORIGENICITY 18 PROTEIN"/>
    <property type="match status" value="1"/>
</dbReference>
<dbReference type="Pfam" id="PF08474">
    <property type="entry name" value="MYT1"/>
    <property type="match status" value="1"/>
</dbReference>
<dbReference type="Pfam" id="PF01530">
    <property type="entry name" value="zf-C2HC"/>
    <property type="match status" value="6"/>
</dbReference>
<dbReference type="SUPFAM" id="SSF103637">
    <property type="entry name" value="CCHHC domain"/>
    <property type="match status" value="6"/>
</dbReference>
<dbReference type="PROSITE" id="PS51802">
    <property type="entry name" value="ZF_CCHHC"/>
    <property type="match status" value="6"/>
</dbReference>
<sequence length="1032" mass="113434">MQRLKIKRCILSQKEPKVAYDCSMAKKRRAEEQALGVPVNKRKSLLMKPRHYSPDMDCKENPDNRNEDDGLETNDHSTADEIVVKPMDKTLHLPAQESSLPKEDQYACYPELMVKSLMHLGKFEESESVQTVGENLNGNGIQSLKAECDEANECFMVHSDDGRDKVHHSQPPFCSSGDSESDSDNTENGWGSGSNSSEDTDTHKGPKRKLTYNRKDLLEVPEIKAEDDKFIPCENRCDSDTSGRDPQNSHMEPLAVKVQPSFPEVEESESLATVIAESAEVEKAKGSLSLLEQAIALQAERGSVFHHTYKELDRFLLDHLARQRRQPKVTDASGRQIFNNKHSPRPERREAKCPIPGCDGTGHVTGLYPHHRSLSGCPHKVRVPLEILAMHENVLKCPTPGCTGRGHVNSNRNTHRSLSGCPIAAAEKLAMTQDKSQLDSSQTGQGPEQAHRVNLVKQIEFNFRSQAITSPRASASKEQEKFGKVPFDYASFDAQVFGKRPLLQTGQGQKAPPFPESKHFSNPVKFSNGLPSAGAHTQSTVRASSYGHGQYSEDTHIAAAAAILNLSTRCREATDILSNKPQSLRAKGAEIEVDENGTLDLSMKKNRILDKSIPPTSSHTTIATPSSSPFKASSLLVNAAFYQALCDQEGWNVPINYSKSHGKTEEEKEKDPVNSLENLEEKKFAGEASIPSPKPKLHTRDLKKELITCPTPGCDGSGHVTGNYASHRSVSGCPLADKTLKSLMAANSQELKCPTPGCDGSGHVTGNYASHRSLSGCPRARKGGIKMTPTKEEKEDSELRCPVIGCDGQGHISGKYTSHRTASGCPLAAKRQKENPLNGTPLSWKLNKQELPHCPLPGCNGLGHVNNVFVTHRSLSGCPLNAQAIKKVKVSEELMTIKLKATGGIEGDEEIRHLDEEIKELNESNLKIEADMMKLQTQITSMESNLKTIEEENKLIEQSNESLLKELAGLSQALISSLADIQLPQMGPINEQNFEAYVNTLTDMYSNLERDYSPECKALLESIKQAVKGIHV</sequence>
<name>ST18_RAT</name>
<gene>
    <name type="primary">St18</name>
    <name type="synonym">Nzf3</name>
</gene>
<keyword id="KW-0025">Alternative splicing</keyword>
<keyword id="KW-0175">Coiled coil</keyword>
<keyword id="KW-0238">DNA-binding</keyword>
<keyword id="KW-0479">Metal-binding</keyword>
<keyword id="KW-0539">Nucleus</keyword>
<keyword id="KW-1185">Reference proteome</keyword>
<keyword id="KW-0677">Repeat</keyword>
<keyword id="KW-0678">Repressor</keyword>
<keyword id="KW-0804">Transcription</keyword>
<keyword id="KW-0805">Transcription regulation</keyword>
<keyword id="KW-0862">Zinc</keyword>
<keyword id="KW-0863">Zinc-finger</keyword>
<evidence type="ECO:0000255" key="1"/>
<evidence type="ECO:0000255" key="2">
    <source>
        <dbReference type="PROSITE-ProRule" id="PRU01143"/>
    </source>
</evidence>
<evidence type="ECO:0000256" key="3">
    <source>
        <dbReference type="SAM" id="MobiDB-lite"/>
    </source>
</evidence>
<evidence type="ECO:0000269" key="4">
    <source>
    </source>
</evidence>
<evidence type="ECO:0000303" key="5">
    <source>
    </source>
</evidence>
<evidence type="ECO:0000305" key="6"/>
<proteinExistence type="evidence at transcript level"/>
<feature type="chain" id="PRO_0000234032" description="Suppression of tumorigenicity 18 protein">
    <location>
        <begin position="1"/>
        <end position="1032"/>
    </location>
</feature>
<feature type="zinc finger region" description="CCHHC-type 1" evidence="2">
    <location>
        <begin position="344"/>
        <end position="387"/>
    </location>
</feature>
<feature type="zinc finger region" description="CCHHC-type 2" evidence="2">
    <location>
        <begin position="388"/>
        <end position="431"/>
    </location>
</feature>
<feature type="zinc finger region" description="CCHHC-type 3" evidence="2">
    <location>
        <begin position="700"/>
        <end position="743"/>
    </location>
</feature>
<feature type="zinc finger region" description="CCHHC-type 4" evidence="2">
    <location>
        <begin position="744"/>
        <end position="787"/>
    </location>
</feature>
<feature type="zinc finger region" description="CCHHC-type 5" evidence="2">
    <location>
        <begin position="792"/>
        <end position="835"/>
    </location>
</feature>
<feature type="zinc finger region" description="CCHHC-type 6" evidence="2">
    <location>
        <begin position="845"/>
        <end position="888"/>
    </location>
</feature>
<feature type="region of interest" description="Disordered" evidence="3">
    <location>
        <begin position="29"/>
        <end position="76"/>
    </location>
</feature>
<feature type="region of interest" description="Disordered" evidence="3">
    <location>
        <begin position="162"/>
        <end position="213"/>
    </location>
</feature>
<feature type="region of interest" description="Disordered" evidence="3">
    <location>
        <begin position="325"/>
        <end position="354"/>
    </location>
</feature>
<feature type="coiled-coil region" evidence="1">
    <location>
        <begin position="905"/>
        <end position="974"/>
    </location>
</feature>
<feature type="compositionally biased region" description="Basic residues" evidence="3">
    <location>
        <begin position="40"/>
        <end position="51"/>
    </location>
</feature>
<feature type="compositionally biased region" description="Basic and acidic residues" evidence="3">
    <location>
        <begin position="52"/>
        <end position="76"/>
    </location>
</feature>
<feature type="binding site" evidence="2">
    <location>
        <position position="353"/>
    </location>
    <ligand>
        <name>Zn(2+)</name>
        <dbReference type="ChEBI" id="CHEBI:29105"/>
        <label>1</label>
    </ligand>
</feature>
<feature type="binding site" evidence="2">
    <location>
        <position position="358"/>
    </location>
    <ligand>
        <name>Zn(2+)</name>
        <dbReference type="ChEBI" id="CHEBI:29105"/>
        <label>1</label>
    </ligand>
</feature>
<feature type="binding site" evidence="2">
    <location>
        <position position="371"/>
    </location>
    <ligand>
        <name>Zn(2+)</name>
        <dbReference type="ChEBI" id="CHEBI:29105"/>
        <label>1</label>
    </ligand>
</feature>
<feature type="binding site" evidence="2">
    <location>
        <position position="377"/>
    </location>
    <ligand>
        <name>Zn(2+)</name>
        <dbReference type="ChEBI" id="CHEBI:29105"/>
        <label>1</label>
    </ligand>
</feature>
<feature type="binding site" evidence="2">
    <location>
        <position position="397"/>
    </location>
    <ligand>
        <name>Zn(2+)</name>
        <dbReference type="ChEBI" id="CHEBI:29105"/>
        <label>2</label>
    </ligand>
</feature>
<feature type="binding site" evidence="2">
    <location>
        <position position="402"/>
    </location>
    <ligand>
        <name>Zn(2+)</name>
        <dbReference type="ChEBI" id="CHEBI:29105"/>
        <label>2</label>
    </ligand>
</feature>
<feature type="binding site" evidence="2">
    <location>
        <position position="415"/>
    </location>
    <ligand>
        <name>Zn(2+)</name>
        <dbReference type="ChEBI" id="CHEBI:29105"/>
        <label>2</label>
    </ligand>
</feature>
<feature type="binding site" evidence="2">
    <location>
        <position position="421"/>
    </location>
    <ligand>
        <name>Zn(2+)</name>
        <dbReference type="ChEBI" id="CHEBI:29105"/>
        <label>2</label>
    </ligand>
</feature>
<feature type="binding site" evidence="2">
    <location>
        <position position="709"/>
    </location>
    <ligand>
        <name>Zn(2+)</name>
        <dbReference type="ChEBI" id="CHEBI:29105"/>
        <label>3</label>
    </ligand>
</feature>
<feature type="binding site" evidence="2">
    <location>
        <position position="714"/>
    </location>
    <ligand>
        <name>Zn(2+)</name>
        <dbReference type="ChEBI" id="CHEBI:29105"/>
        <label>3</label>
    </ligand>
</feature>
<feature type="binding site" evidence="2">
    <location>
        <position position="727"/>
    </location>
    <ligand>
        <name>Zn(2+)</name>
        <dbReference type="ChEBI" id="CHEBI:29105"/>
        <label>3</label>
    </ligand>
</feature>
<feature type="binding site" evidence="2">
    <location>
        <position position="733"/>
    </location>
    <ligand>
        <name>Zn(2+)</name>
        <dbReference type="ChEBI" id="CHEBI:29105"/>
        <label>3</label>
    </ligand>
</feature>
<feature type="binding site" evidence="2">
    <location>
        <position position="753"/>
    </location>
    <ligand>
        <name>Zn(2+)</name>
        <dbReference type="ChEBI" id="CHEBI:29105"/>
        <label>4</label>
    </ligand>
</feature>
<feature type="binding site" evidence="2">
    <location>
        <position position="758"/>
    </location>
    <ligand>
        <name>Zn(2+)</name>
        <dbReference type="ChEBI" id="CHEBI:29105"/>
        <label>4</label>
    </ligand>
</feature>
<feature type="binding site" evidence="2">
    <location>
        <position position="771"/>
    </location>
    <ligand>
        <name>Zn(2+)</name>
        <dbReference type="ChEBI" id="CHEBI:29105"/>
        <label>4</label>
    </ligand>
</feature>
<feature type="binding site" evidence="2">
    <location>
        <position position="777"/>
    </location>
    <ligand>
        <name>Zn(2+)</name>
        <dbReference type="ChEBI" id="CHEBI:29105"/>
        <label>4</label>
    </ligand>
</feature>
<feature type="binding site" evidence="2">
    <location>
        <position position="801"/>
    </location>
    <ligand>
        <name>Zn(2+)</name>
        <dbReference type="ChEBI" id="CHEBI:29105"/>
        <label>5</label>
    </ligand>
</feature>
<feature type="binding site" evidence="2">
    <location>
        <position position="806"/>
    </location>
    <ligand>
        <name>Zn(2+)</name>
        <dbReference type="ChEBI" id="CHEBI:29105"/>
        <label>5</label>
    </ligand>
</feature>
<feature type="binding site" evidence="2">
    <location>
        <position position="819"/>
    </location>
    <ligand>
        <name>Zn(2+)</name>
        <dbReference type="ChEBI" id="CHEBI:29105"/>
        <label>5</label>
    </ligand>
</feature>
<feature type="binding site" evidence="2">
    <location>
        <position position="825"/>
    </location>
    <ligand>
        <name>Zn(2+)</name>
        <dbReference type="ChEBI" id="CHEBI:29105"/>
        <label>5</label>
    </ligand>
</feature>
<feature type="binding site" evidence="2">
    <location>
        <position position="854"/>
    </location>
    <ligand>
        <name>Zn(2+)</name>
        <dbReference type="ChEBI" id="CHEBI:29105"/>
        <label>6</label>
    </ligand>
</feature>
<feature type="binding site" evidence="2">
    <location>
        <position position="859"/>
    </location>
    <ligand>
        <name>Zn(2+)</name>
        <dbReference type="ChEBI" id="CHEBI:29105"/>
        <label>6</label>
    </ligand>
</feature>
<feature type="binding site" evidence="2">
    <location>
        <position position="872"/>
    </location>
    <ligand>
        <name>Zn(2+)</name>
        <dbReference type="ChEBI" id="CHEBI:29105"/>
        <label>6</label>
    </ligand>
</feature>
<feature type="binding site" evidence="2">
    <location>
        <position position="878"/>
    </location>
    <ligand>
        <name>Zn(2+)</name>
        <dbReference type="ChEBI" id="CHEBI:29105"/>
        <label>6</label>
    </ligand>
</feature>
<feature type="splice variant" id="VSP_018195" description="In isoform 2." evidence="5">
    <original>MQRLKIKRCILSQKEPK</original>
    <variation>MDSLIPELR</variation>
    <location>
        <begin position="1"/>
        <end position="17"/>
    </location>
</feature>
<feature type="sequence conflict" description="In Ref. 1; AAC40048." evidence="6" ref="1">
    <original>G</original>
    <variation>N</variation>
    <location>
        <position position="70"/>
    </location>
</feature>
<feature type="sequence conflict" description="In Ref. 1; AAC40048." evidence="6" ref="1">
    <original>N</original>
    <variation>P</variation>
    <location>
        <position position="74"/>
    </location>
</feature>
<feature type="sequence conflict" description="In Ref. 2; AAB40717." evidence="6" ref="2">
    <original>V</original>
    <variation>E</variation>
    <location>
        <position position="157"/>
    </location>
</feature>
<feature type="sequence conflict" description="In Ref. 2; AAB40717." evidence="6" ref="2">
    <original>A</original>
    <variation>S</variation>
    <location>
        <position position="255"/>
    </location>
</feature>
<feature type="sequence conflict" description="In Ref. 1; AAC40048." evidence="6" ref="1">
    <original>N</original>
    <variation>H</variation>
    <location>
        <position position="606"/>
    </location>
</feature>
<feature type="sequence conflict" description="In Ref. 2; AAB40717." evidence="6" ref="2">
    <original>PP</original>
    <variation>GG</variation>
    <location>
        <begin position="614"/>
        <end position="615"/>
    </location>
</feature>
<feature type="sequence conflict" description="In Ref. 2; AAB40717." evidence="6" ref="2">
    <original>L</original>
    <variation>V</variation>
    <location>
        <position position="751"/>
    </location>
</feature>
<feature type="sequence conflict" description="In Ref. 2; AAB40717." evidence="6" ref="2">
    <location>
        <position position="840"/>
    </location>
</feature>
<feature type="sequence conflict" description="In Ref. 1; AAC40048." evidence="6" ref="1">
    <original>V</original>
    <variation>A</variation>
    <location>
        <position position="1027"/>
    </location>
</feature>
<reference key="1">
    <citation type="journal article" date="1996" name="Cell">
        <title>X-MyT1, a Xenopus C2HC-type zinc finger protein with a regulatory function in neuronal differentiation.</title>
        <authorList>
            <person name="Bellefroid E.J."/>
            <person name="Bourguignon C."/>
            <person name="Hollemann T."/>
            <person name="Ma Q."/>
            <person name="Anderson D.J."/>
            <person name="Kintner C."/>
            <person name="Pieler T."/>
        </authorList>
    </citation>
    <scope>NUCLEOTIDE SEQUENCE [MRNA] (ISOFORM 2)</scope>
    <source>
        <tissue>Brain cortex</tissue>
    </source>
</reference>
<reference key="2">
    <citation type="journal article" date="1998" name="J. Biol. Chem.">
        <title>Isolation and characterization of a novel member of the neural zinc finger factor/myelin transcription factor family with transcriptional repression activity.</title>
        <authorList>
            <person name="Yee K.S.Y."/>
            <person name="Yu V.C."/>
        </authorList>
    </citation>
    <scope>NUCLEOTIDE SEQUENCE [MRNA] (ISOFORM 1)</scope>
    <scope>FUNCTION</scope>
    <scope>SUBCELLULAR LOCATION</scope>
    <scope>TISSUE SPECIFICITY</scope>
    <source>
        <tissue>Brain</tissue>
    </source>
</reference>
<comment type="function">
    <text evidence="4">Repressor that binds to DNA sequences containing a bipartite element consisting of a direct repeat of the sequence 5'-AAAGTTT-3' separated by 2-9 nucleotides. Represses basal transcription activity from target promoters.</text>
</comment>
<comment type="subcellular location">
    <subcellularLocation>
        <location evidence="4">Nucleus</location>
    </subcellularLocation>
</comment>
<comment type="alternative products">
    <event type="alternative splicing"/>
    <isoform>
        <id>Q9QX27-1</id>
        <name>1</name>
        <sequence type="displayed"/>
    </isoform>
    <isoform>
        <id>Q9QX27-2</id>
        <name>2</name>
        <sequence type="described" ref="VSP_018195"/>
    </isoform>
</comment>
<comment type="tissue specificity">
    <text evidence="4">Detected in brain.</text>
</comment>
<comment type="similarity">
    <text evidence="6">Belongs to the MYT1 family.</text>
</comment>
<accession>Q9QX27</accession>
<accession>P70588</accession>
<organism>
    <name type="scientific">Rattus norvegicus</name>
    <name type="common">Rat</name>
    <dbReference type="NCBI Taxonomy" id="10116"/>
    <lineage>
        <taxon>Eukaryota</taxon>
        <taxon>Metazoa</taxon>
        <taxon>Chordata</taxon>
        <taxon>Craniata</taxon>
        <taxon>Vertebrata</taxon>
        <taxon>Euteleostomi</taxon>
        <taxon>Mammalia</taxon>
        <taxon>Eutheria</taxon>
        <taxon>Euarchontoglires</taxon>
        <taxon>Glires</taxon>
        <taxon>Rodentia</taxon>
        <taxon>Myomorpha</taxon>
        <taxon>Muroidea</taxon>
        <taxon>Muridae</taxon>
        <taxon>Murinae</taxon>
        <taxon>Rattus</taxon>
    </lineage>
</organism>
<protein>
    <recommendedName>
        <fullName>Suppression of tumorigenicity 18 protein</fullName>
    </recommendedName>
    <alternativeName>
        <fullName>C2-HC type zinc finger protein r-MyT3</fullName>
    </alternativeName>
    <alternativeName>
        <fullName>Neural zinc finger factor 3</fullName>
        <shortName>NZF-3</shortName>
    </alternativeName>
</protein>